<keyword id="KW-1216">Complement system impairing toxin</keyword>
<keyword id="KW-1015">Disulfide bond</keyword>
<keyword id="KW-1199">Hemostasis impairing toxin</keyword>
<keyword id="KW-0379">Hydroxylation</keyword>
<keyword id="KW-0964">Secreted</keyword>
<keyword id="KW-0732">Signal</keyword>
<keyword id="KW-0800">Toxin</keyword>
<organism>
    <name type="scientific">Cerberus rynchops</name>
    <name type="common">Dog-faced water snake</name>
    <dbReference type="NCBI Taxonomy" id="46267"/>
    <lineage>
        <taxon>Eukaryota</taxon>
        <taxon>Metazoa</taxon>
        <taxon>Chordata</taxon>
        <taxon>Craniata</taxon>
        <taxon>Vertebrata</taxon>
        <taxon>Euteleostomi</taxon>
        <taxon>Lepidosauria</taxon>
        <taxon>Squamata</taxon>
        <taxon>Bifurcata</taxon>
        <taxon>Unidentata</taxon>
        <taxon>Episquamata</taxon>
        <taxon>Toxicofera</taxon>
        <taxon>Serpentes</taxon>
        <taxon>Colubroidea</taxon>
        <taxon>Homalopsidae</taxon>
        <taxon>Cerberus</taxon>
    </lineage>
</organism>
<sequence>MKPWAAFHLIFLVASSLEGEVSNYGTRGAQDTEPTCRTEHQCTRDKIILQSQPGIPGIPGVPGTNGSEGLKGDPGPQGPPGIRGPDGIRGEAGPKGDKGDQGDKGDKGDKGDKGEDCNLDDCLPTEVRNCQDLLERGETLNGWYKIYPTEEVSMLVFCDMSTDGGGWLVFQRRQDGSVNFYREWESYKKGFGRQGSEFWLGNDKIHLLTNSGTQQLRIDLADFENIHTFATYSSFSIGNETEKYKLTLGSHLDGNMGDSLTLQNGRSFSTKDRDNDVSHIHCAVNFKGAWWYRKCHESNLNGLYHKGKHATYANGINWLTGKGYHYSYKYADMKIRPQKSETTVS</sequence>
<comment type="function">
    <text evidence="1">Initiates complement activation and/or interferes in platelet aggregation and/or blood coagulation.</text>
</comment>
<comment type="subcellular location">
    <subcellularLocation>
        <location>Secreted</location>
    </subcellularLocation>
</comment>
<comment type="tissue specificity">
    <text>Expressed by the venom duct.</text>
</comment>
<comment type="PTM">
    <text evidence="5">Hydroxylated, possibly at Pro-80.</text>
</comment>
<comment type="similarity">
    <text evidence="6">Belongs to the ficolin lectin family. Veficolin subfamily.</text>
</comment>
<accession>D8VNT0</accession>
<name>FCNV4_CERRY</name>
<dbReference type="EMBL" id="GU065326">
    <property type="protein sequence ID" value="ADJ51065.1"/>
    <property type="molecule type" value="mRNA"/>
</dbReference>
<dbReference type="SMR" id="D8VNT0"/>
<dbReference type="GO" id="GO:0005615">
    <property type="term" value="C:extracellular space"/>
    <property type="evidence" value="ECO:0007669"/>
    <property type="project" value="TreeGrafter"/>
</dbReference>
<dbReference type="GO" id="GO:0003823">
    <property type="term" value="F:antigen binding"/>
    <property type="evidence" value="ECO:0007669"/>
    <property type="project" value="TreeGrafter"/>
</dbReference>
<dbReference type="GO" id="GO:0097367">
    <property type="term" value="F:carbohydrate derivative binding"/>
    <property type="evidence" value="ECO:0007669"/>
    <property type="project" value="TreeGrafter"/>
</dbReference>
<dbReference type="GO" id="GO:0005102">
    <property type="term" value="F:signaling receptor binding"/>
    <property type="evidence" value="ECO:0007669"/>
    <property type="project" value="TreeGrafter"/>
</dbReference>
<dbReference type="GO" id="GO:0090729">
    <property type="term" value="F:toxin activity"/>
    <property type="evidence" value="ECO:0007669"/>
    <property type="project" value="UniProtKB-KW"/>
</dbReference>
<dbReference type="GO" id="GO:0001867">
    <property type="term" value="P:complement activation, lectin pathway"/>
    <property type="evidence" value="ECO:0007669"/>
    <property type="project" value="TreeGrafter"/>
</dbReference>
<dbReference type="CDD" id="cd00087">
    <property type="entry name" value="FReD"/>
    <property type="match status" value="1"/>
</dbReference>
<dbReference type="FunFam" id="3.90.215.10:FF:000001">
    <property type="entry name" value="Tenascin isoform 1"/>
    <property type="match status" value="1"/>
</dbReference>
<dbReference type="Gene3D" id="3.90.215.10">
    <property type="entry name" value="Gamma Fibrinogen, chain A, domain 1"/>
    <property type="match status" value="1"/>
</dbReference>
<dbReference type="InterPro" id="IPR008160">
    <property type="entry name" value="Collagen"/>
</dbReference>
<dbReference type="InterPro" id="IPR036056">
    <property type="entry name" value="Fibrinogen-like_C"/>
</dbReference>
<dbReference type="InterPro" id="IPR014716">
    <property type="entry name" value="Fibrinogen_a/b/g_C_1"/>
</dbReference>
<dbReference type="InterPro" id="IPR002181">
    <property type="entry name" value="Fibrinogen_a/b/g_C_dom"/>
</dbReference>
<dbReference type="InterPro" id="IPR050373">
    <property type="entry name" value="Fibrinogen_C-term_domain"/>
</dbReference>
<dbReference type="InterPro" id="IPR020837">
    <property type="entry name" value="Fibrinogen_CS"/>
</dbReference>
<dbReference type="NCBIfam" id="NF040941">
    <property type="entry name" value="GGGWT_bact"/>
    <property type="match status" value="1"/>
</dbReference>
<dbReference type="PANTHER" id="PTHR19143">
    <property type="entry name" value="FIBRINOGEN/TENASCIN/ANGIOPOEITIN"/>
    <property type="match status" value="1"/>
</dbReference>
<dbReference type="PANTHER" id="PTHR19143:SF415">
    <property type="entry name" value="FICOLIN-3"/>
    <property type="match status" value="1"/>
</dbReference>
<dbReference type="Pfam" id="PF01391">
    <property type="entry name" value="Collagen"/>
    <property type="match status" value="1"/>
</dbReference>
<dbReference type="Pfam" id="PF00147">
    <property type="entry name" value="Fibrinogen_C"/>
    <property type="match status" value="1"/>
</dbReference>
<dbReference type="SMART" id="SM00186">
    <property type="entry name" value="FBG"/>
    <property type="match status" value="1"/>
</dbReference>
<dbReference type="SUPFAM" id="SSF56496">
    <property type="entry name" value="Fibrinogen C-terminal domain-like"/>
    <property type="match status" value="1"/>
</dbReference>
<dbReference type="PROSITE" id="PS00514">
    <property type="entry name" value="FIBRINOGEN_C_1"/>
    <property type="match status" value="1"/>
</dbReference>
<dbReference type="PROSITE" id="PS51406">
    <property type="entry name" value="FIBRINOGEN_C_2"/>
    <property type="match status" value="1"/>
</dbReference>
<reference key="1">
    <citation type="journal article" date="2010" name="J. Proteome Res.">
        <title>Identification of a novel family of snake venom proteins Veficolins from Cerberus rynchops using a venom gland transcriptomics and proteomics approach.</title>
        <authorList>
            <person name="Ompraba G."/>
            <person name="Chapeaurouge A."/>
            <person name="Doley R."/>
            <person name="Devi K.R."/>
            <person name="Padmanaban P."/>
            <person name="Venkatraman C."/>
            <person name="Velmurugan D."/>
            <person name="Lin Q."/>
            <person name="Kini R.M."/>
        </authorList>
    </citation>
    <scope>NUCLEOTIDE SEQUENCE [MRNA]</scope>
    <scope>IDENTIFICATION BY MASS SPECTROMETRY</scope>
    <scope>HYDROXYLATION</scope>
    <source>
        <tissue>Venom</tissue>
        <tissue>Venom gland</tissue>
    </source>
</reference>
<feature type="signal peptide" evidence="2">
    <location>
        <begin position="1"/>
        <end position="19"/>
    </location>
</feature>
<feature type="chain" id="PRO_0000414921" description="Ryncolin-4">
    <location>
        <begin position="20"/>
        <end position="345"/>
    </location>
</feature>
<feature type="domain" description="Collagen-like">
    <location>
        <begin position="57"/>
        <end position="114"/>
    </location>
</feature>
<feature type="domain" description="Fibrinogen C-terminal" evidence="3">
    <location>
        <begin position="121"/>
        <end position="339"/>
    </location>
</feature>
<feature type="region of interest" description="Disordered" evidence="4">
    <location>
        <begin position="48"/>
        <end position="118"/>
    </location>
</feature>
<feature type="compositionally biased region" description="Basic and acidic residues" evidence="4">
    <location>
        <begin position="86"/>
        <end position="116"/>
    </location>
</feature>
<feature type="disulfide bond" evidence="3">
    <location>
        <begin position="130"/>
        <end position="158"/>
    </location>
</feature>
<feature type="disulfide bond" evidence="3">
    <location>
        <begin position="282"/>
        <end position="295"/>
    </location>
</feature>
<evidence type="ECO:0000250" key="1"/>
<evidence type="ECO:0000255" key="2"/>
<evidence type="ECO:0000255" key="3">
    <source>
        <dbReference type="PROSITE-ProRule" id="PRU00739"/>
    </source>
</evidence>
<evidence type="ECO:0000256" key="4">
    <source>
        <dbReference type="SAM" id="MobiDB-lite"/>
    </source>
</evidence>
<evidence type="ECO:0000269" key="5">
    <source>
    </source>
</evidence>
<evidence type="ECO:0000305" key="6"/>
<protein>
    <recommendedName>
        <fullName>Ryncolin-4</fullName>
    </recommendedName>
</protein>
<proteinExistence type="evidence at protein level"/>